<reference key="1">
    <citation type="journal article" date="1989" name="Mol. Cell. Biol.">
        <title>Cloning and sequence analysis of the Saccharomyces cerevisiae RAD9 gene and further evidence that its product is required for cell cycle arrest induced by DNA damage.</title>
        <authorList>
            <person name="Schiestl R.H."/>
            <person name="Reynolds P."/>
            <person name="Prakash S."/>
            <person name="Prakash L."/>
        </authorList>
    </citation>
    <scope>NUCLEOTIDE SEQUENCE [GENOMIC DNA]</scope>
</reference>
<reference key="2">
    <citation type="journal article" date="1990" name="Mol. Cell. Biol.">
        <title>Characterization of RAD9 of Saccharomyces cerevisiae and evidence that its function acts posttranslationally in cell cycle arrest after DNA damage.</title>
        <authorList>
            <person name="Weinert T.A."/>
            <person name="Hartwell L.H."/>
        </authorList>
    </citation>
    <scope>NUCLEOTIDE SEQUENCE [GENOMIC DNA]</scope>
    <scope>CHARACTERIZATION</scope>
</reference>
<reference key="3">
    <citation type="journal article" date="1997" name="Nature">
        <title>The nucleotide sequence of Saccharomyces cerevisiae chromosome IV.</title>
        <authorList>
            <person name="Jacq C."/>
            <person name="Alt-Moerbe J."/>
            <person name="Andre B."/>
            <person name="Arnold W."/>
            <person name="Bahr A."/>
            <person name="Ballesta J.P.G."/>
            <person name="Bargues M."/>
            <person name="Baron L."/>
            <person name="Becker A."/>
            <person name="Biteau N."/>
            <person name="Bloecker H."/>
            <person name="Blugeon C."/>
            <person name="Boskovic J."/>
            <person name="Brandt P."/>
            <person name="Brueckner M."/>
            <person name="Buitrago M.J."/>
            <person name="Coster F."/>
            <person name="Delaveau T."/>
            <person name="del Rey F."/>
            <person name="Dujon B."/>
            <person name="Eide L.G."/>
            <person name="Garcia-Cantalejo J.M."/>
            <person name="Goffeau A."/>
            <person name="Gomez-Peris A."/>
            <person name="Granotier C."/>
            <person name="Hanemann V."/>
            <person name="Hankeln T."/>
            <person name="Hoheisel J.D."/>
            <person name="Jaeger W."/>
            <person name="Jimenez A."/>
            <person name="Jonniaux J.-L."/>
            <person name="Kraemer C."/>
            <person name="Kuester H."/>
            <person name="Laamanen P."/>
            <person name="Legros Y."/>
            <person name="Louis E.J."/>
            <person name="Moeller-Rieker S."/>
            <person name="Monnet A."/>
            <person name="Moro M."/>
            <person name="Mueller-Auer S."/>
            <person name="Nussbaumer B."/>
            <person name="Paricio N."/>
            <person name="Paulin L."/>
            <person name="Perea J."/>
            <person name="Perez-Alonso M."/>
            <person name="Perez-Ortin J.E."/>
            <person name="Pohl T.M."/>
            <person name="Prydz H."/>
            <person name="Purnelle B."/>
            <person name="Rasmussen S.W."/>
            <person name="Remacha M.A."/>
            <person name="Revuelta J.L."/>
            <person name="Rieger M."/>
            <person name="Salom D."/>
            <person name="Saluz H.P."/>
            <person name="Saiz J.E."/>
            <person name="Saren A.-M."/>
            <person name="Schaefer M."/>
            <person name="Scharfe M."/>
            <person name="Schmidt E.R."/>
            <person name="Schneider C."/>
            <person name="Scholler P."/>
            <person name="Schwarz S."/>
            <person name="Soler-Mira A."/>
            <person name="Urrestarazu L.A."/>
            <person name="Verhasselt P."/>
            <person name="Vissers S."/>
            <person name="Voet M."/>
            <person name="Volckaert G."/>
            <person name="Wagner G."/>
            <person name="Wambutt R."/>
            <person name="Wedler E."/>
            <person name="Wedler H."/>
            <person name="Woelfl S."/>
            <person name="Harris D.E."/>
            <person name="Bowman S."/>
            <person name="Brown D."/>
            <person name="Churcher C.M."/>
            <person name="Connor R."/>
            <person name="Dedman K."/>
            <person name="Gentles S."/>
            <person name="Hamlin N."/>
            <person name="Hunt S."/>
            <person name="Jones L."/>
            <person name="McDonald S."/>
            <person name="Murphy L.D."/>
            <person name="Niblett D."/>
            <person name="Odell C."/>
            <person name="Oliver K."/>
            <person name="Rajandream M.A."/>
            <person name="Richards C."/>
            <person name="Shore L."/>
            <person name="Walsh S.V."/>
            <person name="Barrell B.G."/>
            <person name="Dietrich F.S."/>
            <person name="Mulligan J.T."/>
            <person name="Allen E."/>
            <person name="Araujo R."/>
            <person name="Aviles E."/>
            <person name="Berno A."/>
            <person name="Carpenter J."/>
            <person name="Chen E."/>
            <person name="Cherry J.M."/>
            <person name="Chung E."/>
            <person name="Duncan M."/>
            <person name="Hunicke-Smith S."/>
            <person name="Hyman R.W."/>
            <person name="Komp C."/>
            <person name="Lashkari D."/>
            <person name="Lew H."/>
            <person name="Lin D."/>
            <person name="Mosedale D."/>
            <person name="Nakahara K."/>
            <person name="Namath A."/>
            <person name="Oefner P."/>
            <person name="Oh C."/>
            <person name="Petel F.X."/>
            <person name="Roberts D."/>
            <person name="Schramm S."/>
            <person name="Schroeder M."/>
            <person name="Shogren T."/>
            <person name="Shroff N."/>
            <person name="Winant A."/>
            <person name="Yelton M.A."/>
            <person name="Botstein D."/>
            <person name="Davis R.W."/>
            <person name="Johnston M."/>
            <person name="Andrews S."/>
            <person name="Brinkman R."/>
            <person name="Cooper J."/>
            <person name="Ding H."/>
            <person name="Du Z."/>
            <person name="Favello A."/>
            <person name="Fulton L."/>
            <person name="Gattung S."/>
            <person name="Greco T."/>
            <person name="Hallsworth K."/>
            <person name="Hawkins J."/>
            <person name="Hillier L.W."/>
            <person name="Jier M."/>
            <person name="Johnson D."/>
            <person name="Johnston L."/>
            <person name="Kirsten J."/>
            <person name="Kucaba T."/>
            <person name="Langston Y."/>
            <person name="Latreille P."/>
            <person name="Le T."/>
            <person name="Mardis E."/>
            <person name="Menezes S."/>
            <person name="Miller N."/>
            <person name="Nhan M."/>
            <person name="Pauley A."/>
            <person name="Peluso D."/>
            <person name="Rifkin L."/>
            <person name="Riles L."/>
            <person name="Taich A."/>
            <person name="Trevaskis E."/>
            <person name="Vignati D."/>
            <person name="Wilcox L."/>
            <person name="Wohldman P."/>
            <person name="Vaudin M."/>
            <person name="Wilson R."/>
            <person name="Waterston R."/>
            <person name="Albermann K."/>
            <person name="Hani J."/>
            <person name="Heumann K."/>
            <person name="Kleine K."/>
            <person name="Mewes H.-W."/>
            <person name="Zollner A."/>
            <person name="Zaccaria P."/>
        </authorList>
    </citation>
    <scope>NUCLEOTIDE SEQUENCE [LARGE SCALE GENOMIC DNA]</scope>
    <source>
        <strain>ATCC 204508 / S288c</strain>
    </source>
</reference>
<reference key="4">
    <citation type="journal article" date="2014" name="G3 (Bethesda)">
        <title>The reference genome sequence of Saccharomyces cerevisiae: Then and now.</title>
        <authorList>
            <person name="Engel S.R."/>
            <person name="Dietrich F.S."/>
            <person name="Fisk D.G."/>
            <person name="Binkley G."/>
            <person name="Balakrishnan R."/>
            <person name="Costanzo M.C."/>
            <person name="Dwight S.S."/>
            <person name="Hitz B.C."/>
            <person name="Karra K."/>
            <person name="Nash R.S."/>
            <person name="Weng S."/>
            <person name="Wong E.D."/>
            <person name="Lloyd P."/>
            <person name="Skrzypek M.S."/>
            <person name="Miyasato S.R."/>
            <person name="Simison M."/>
            <person name="Cherry J.M."/>
        </authorList>
    </citation>
    <scope>GENOME REANNOTATION</scope>
    <source>
        <strain>ATCC 204508 / S288c</strain>
    </source>
</reference>
<reference key="5">
    <citation type="journal article" date="1998" name="EMBO J.">
        <title>The budding yeast Rad9 checkpoint protein is subjected to Mec1/Tel1-dependent hyperphosphorylation and interacts with Rad53 after DNA damage.</title>
        <authorList>
            <person name="Vialard J.E."/>
            <person name="Gilbert C.S."/>
            <person name="Green C.M."/>
            <person name="Lowndes N.F."/>
        </authorList>
    </citation>
    <scope>PHOSPHORYLATION</scope>
    <scope>INTERACTION WITH RAD53</scope>
</reference>
<reference key="6">
    <citation type="journal article" date="2003" name="Nature">
        <title>Global analysis of protein expression in yeast.</title>
        <authorList>
            <person name="Ghaemmaghami S."/>
            <person name="Huh W.-K."/>
            <person name="Bower K."/>
            <person name="Howson R.W."/>
            <person name="Belle A."/>
            <person name="Dephoure N."/>
            <person name="O'Shea E.K."/>
            <person name="Weissman J.S."/>
        </authorList>
    </citation>
    <scope>LEVEL OF PROTEIN EXPRESSION [LARGE SCALE ANALYSIS]</scope>
</reference>
<reference key="7">
    <citation type="journal article" date="2007" name="Proc. Natl. Acad. Sci. U.S.A.">
        <title>Analysis of phosphorylation sites on proteins from Saccharomyces cerevisiae by electron transfer dissociation (ETD) mass spectrometry.</title>
        <authorList>
            <person name="Chi A."/>
            <person name="Huttenhower C."/>
            <person name="Geer L.Y."/>
            <person name="Coon J.J."/>
            <person name="Syka J.E.P."/>
            <person name="Bai D.L."/>
            <person name="Shabanowitz J."/>
            <person name="Burke D.J."/>
            <person name="Troyanskaya O.G."/>
            <person name="Hunt D.F."/>
        </authorList>
    </citation>
    <scope>IDENTIFICATION BY MASS SPECTROMETRY [LARGE SCALE ANALYSIS]</scope>
</reference>
<reference key="8">
    <citation type="journal article" date="2008" name="Mol. Cell. Proteomics">
        <title>A multidimensional chromatography technology for in-depth phosphoproteome analysis.</title>
        <authorList>
            <person name="Albuquerque C.P."/>
            <person name="Smolka M.B."/>
            <person name="Payne S.H."/>
            <person name="Bafna V."/>
            <person name="Eng J."/>
            <person name="Zhou H."/>
        </authorList>
    </citation>
    <scope>PHOSPHORYLATION [LARGE SCALE ANALYSIS] AT SER-26; SER-56; SER-205; THR-218; SER-248; SER-312; SER-315; SER-462; SER-568 AND SER-729</scope>
    <scope>IDENTIFICATION BY MASS SPECTROMETRY [LARGE SCALE ANALYSIS]</scope>
</reference>
<reference key="9">
    <citation type="journal article" date="2009" name="Science">
        <title>Global analysis of Cdk1 substrate phosphorylation sites provides insights into evolution.</title>
        <authorList>
            <person name="Holt L.J."/>
            <person name="Tuch B.B."/>
            <person name="Villen J."/>
            <person name="Johnson A.D."/>
            <person name="Gygi S.P."/>
            <person name="Morgan D.O."/>
        </authorList>
    </citation>
    <scope>PHOSPHORYLATION [LARGE SCALE ANALYSIS] AT SER-26; SER-56; SER-315; SER-462; THR-471; THR-474 AND SER-729</scope>
    <scope>IDENTIFICATION BY MASS SPECTROMETRY [LARGE SCALE ANALYSIS]</scope>
</reference>
<comment type="function">
    <text>Essential for cell cycle arrest at the G2 stage following DNA damage by X-irradiation or inactivation of DNA ligase.</text>
</comment>
<comment type="subunit">
    <text>Physically associates with RAD53.</text>
</comment>
<comment type="interaction">
    <interactant intactId="EBI-14788">
        <id>P14737</id>
    </interactant>
    <interactant intactId="EBI-4440">
        <id>P32562</id>
        <label>CDC5</label>
    </interactant>
    <organismsDiffer>false</organismsDiffer>
    <experiments>2</experiments>
</comment>
<comment type="interaction">
    <interactant intactId="EBI-14788">
        <id>P14737</id>
    </interactant>
    <interactant intactId="EBI-25984">
        <id>P47027</id>
        <label>DPB11</label>
    </interactant>
    <organismsDiffer>false</organismsDiffer>
    <experiments>13</experiments>
</comment>
<comment type="interaction">
    <interactant intactId="EBI-14788">
        <id>P14737</id>
    </interactant>
    <interactant intactId="EBI-17843">
        <id>P22216</id>
        <label>RAD53</label>
    </interactant>
    <organismsDiffer>false</organismsDiffer>
    <experiments>12</experiments>
</comment>
<comment type="subcellular location">
    <subcellularLocation>
        <location>Nucleus</location>
    </subcellularLocation>
</comment>
<comment type="miscellaneous">
    <text evidence="3">Present with 400 molecules/cell in log phase SD medium.</text>
</comment>
<feature type="chain" id="PRO_0000097158" description="DNA repair protein RAD9">
    <location>
        <begin position="1"/>
        <end position="1309"/>
    </location>
</feature>
<feature type="domain" description="BRCT" evidence="1">
    <location>
        <begin position="994"/>
        <end position="1122"/>
    </location>
</feature>
<feature type="region of interest" description="Disordered" evidence="2">
    <location>
        <begin position="1"/>
        <end position="39"/>
    </location>
</feature>
<feature type="region of interest" description="Disordered" evidence="2">
    <location>
        <begin position="280"/>
        <end position="299"/>
    </location>
</feature>
<feature type="region of interest" description="Disordered" evidence="2">
    <location>
        <begin position="342"/>
        <end position="365"/>
    </location>
</feature>
<feature type="region of interest" description="Disordered" evidence="2">
    <location>
        <begin position="490"/>
        <end position="512"/>
    </location>
</feature>
<feature type="region of interest" description="Disordered" evidence="2">
    <location>
        <begin position="636"/>
        <end position="655"/>
    </location>
</feature>
<feature type="region of interest" description="Disordered" evidence="2">
    <location>
        <begin position="691"/>
        <end position="731"/>
    </location>
</feature>
<feature type="compositionally biased region" description="Polar residues" evidence="2">
    <location>
        <begin position="1"/>
        <end position="19"/>
    </location>
</feature>
<feature type="compositionally biased region" description="Basic and acidic residues" evidence="2">
    <location>
        <begin position="284"/>
        <end position="299"/>
    </location>
</feature>
<feature type="compositionally biased region" description="Polar residues" evidence="2">
    <location>
        <begin position="343"/>
        <end position="352"/>
    </location>
</feature>
<feature type="compositionally biased region" description="Polar residues" evidence="2">
    <location>
        <begin position="491"/>
        <end position="508"/>
    </location>
</feature>
<feature type="compositionally biased region" description="Basic and acidic residues" evidence="2">
    <location>
        <begin position="642"/>
        <end position="655"/>
    </location>
</feature>
<feature type="modified residue" description="Phosphoserine" evidence="5 6">
    <location>
        <position position="26"/>
    </location>
</feature>
<feature type="modified residue" description="Phosphoserine" evidence="5 6">
    <location>
        <position position="56"/>
    </location>
</feature>
<feature type="modified residue" description="Phosphoserine" evidence="5">
    <location>
        <position position="205"/>
    </location>
</feature>
<feature type="modified residue" description="Phosphothreonine" evidence="5">
    <location>
        <position position="218"/>
    </location>
</feature>
<feature type="modified residue" description="Phosphoserine" evidence="5">
    <location>
        <position position="248"/>
    </location>
</feature>
<feature type="modified residue" description="Phosphoserine" evidence="5">
    <location>
        <position position="312"/>
    </location>
</feature>
<feature type="modified residue" description="Phosphoserine" evidence="5 6">
    <location>
        <position position="315"/>
    </location>
</feature>
<feature type="modified residue" description="Phosphoserine" evidence="5 6">
    <location>
        <position position="462"/>
    </location>
</feature>
<feature type="modified residue" description="Phosphothreonine" evidence="6">
    <location>
        <position position="471"/>
    </location>
</feature>
<feature type="modified residue" description="Phosphothreonine" evidence="6">
    <location>
        <position position="474"/>
    </location>
</feature>
<feature type="modified residue" description="Phosphoserine" evidence="5">
    <location>
        <position position="568"/>
    </location>
</feature>
<feature type="modified residue" description="Phosphoserine" evidence="5 6">
    <location>
        <position position="729"/>
    </location>
</feature>
<feature type="sequence conflict" description="In Ref. 1; AAA34954 and 2; no nucleotide entry." evidence="4" ref="1 2">
    <original>S</original>
    <variation>C</variation>
    <location>
        <position position="433"/>
    </location>
</feature>
<feature type="strand" evidence="7">
    <location>
        <begin position="190"/>
        <end position="192"/>
    </location>
</feature>
<evidence type="ECO:0000255" key="1">
    <source>
        <dbReference type="PROSITE-ProRule" id="PRU00033"/>
    </source>
</evidence>
<evidence type="ECO:0000256" key="2">
    <source>
        <dbReference type="SAM" id="MobiDB-lite"/>
    </source>
</evidence>
<evidence type="ECO:0000269" key="3">
    <source>
    </source>
</evidence>
<evidence type="ECO:0000305" key="4"/>
<evidence type="ECO:0007744" key="5">
    <source>
    </source>
</evidence>
<evidence type="ECO:0007744" key="6">
    <source>
    </source>
</evidence>
<evidence type="ECO:0007829" key="7">
    <source>
        <dbReference type="PDB" id="1K3Q"/>
    </source>
</evidence>
<gene>
    <name type="primary">RAD9</name>
    <name type="ordered locus">YDR217C</name>
    <name type="ORF">YD9934.02C</name>
</gene>
<sequence length="1309" mass="148398">MSGQLVQWKSSPDRVTQSAIKEALHSPLADGDMNEMNVPVDPLENKVNSTNIIEGSPKANPNPVKFMNTSEIFQKSLGLLDESPRHDDELNIEVGDNDRPNANILHNERTPDLDRIANFFKSNRTPGKENLLTKYQSSDLEDTPLMLRKKMTFQTPTDPLEQKTFKKLKSDTGFCYYGEQNDGEENASLEVTEADATFVQMAERSADNYDCALEGIVTPKRYKDELSKSGGMQDERVQKTQIMISAESPNSISSYDKNKITGNGRTTRNVNKVFNNNEDNIGAIEEKNPVKKKSENYSSDDLRERNNQIIQSNESEEINELEKNLNVSGRENDVNNLDIDINSAVSGTPSRNNAEEEMYSSESVNNREPSKKWIFRYSKDKTENNSNRSTQIVNNPRTQEMPLDSISIDTQPLSKSFNTETNNELETQIIVSSLSQGISAQKGPVFHSTGQTEEIKTQIINSPEQNALNATFETPVTLSRINFEPILEVPETSSPSKNTMSKPSNSSPIPKEKDTFNIHEREVETNNVFSNDIQNSSNAATRDDIIIAGSSDFNEQKEITDRIYLQLSGKQISDSGSDETERMSPNELDTKKESTIMSEVELTQELPEVEEQQDLQTSPKKLVVEEETLMEIKKSKGNSLQLHDDNKECNSDKQDGTESLDVALIEHESKGQSSELQKNLMQLFPSESQEIIQNRRTIKRRQKDTIEIGEEEENRSTKTSPTKHLKRNSDLDAASIKREPSCSITIQTGETGSGKDSKEQSYVFPEGIRTADNSFLSKDDIIFGNAVWCQYTWNYKFYPGILLEVDTNQDGCWIYFETGRSLTKDEDIYYLDIRIGDAVTFDGNEYVVVGLECRSHDLNIIRCIRGYDTVHLKKKNASGLLGKRTLIKALSSISLDLSEWAKRAKIILEDNEKNKGDAYRYLRHPIRGRKSMTNVLSPKKHTDDEKDINTHTEVYNNEIESSSEKKEIVKKDSRDALAEHAGAPSLLFSSGEIRTGNVFDKCIFVLTSLFENREELRQTIESQGGTVIESGFSTLFNFTHPLAKSLVNKGNTDNIRELALKLAWKPHSLFADCRFACLITKRHLRSLKYLETLALGWPTLHWKFISACIEKKRIVPHLIYQYLLPSGESFRLSLDSPSKGGIIKSNNIFSFYTQFLRGSNLRDQICGVKKMLNDYIVIVWGRSELDSFVKFAFACLSAGRMLTIDLPNIDVDDTEPLLNALDSLVPRIGSELSNRKLKFLIYANENNGKSQMKLLERLRSQISLKFKKFNYIFHTESKEWLIQTIINEDTGFHDDITDNDIYNTISEVR</sequence>
<proteinExistence type="evidence at protein level"/>
<keyword id="KW-0002">3D-structure</keyword>
<keyword id="KW-0131">Cell cycle</keyword>
<keyword id="KW-0227">DNA damage</keyword>
<keyword id="KW-0236">DNA replication inhibitor</keyword>
<keyword id="KW-0539">Nucleus</keyword>
<keyword id="KW-0597">Phosphoprotein</keyword>
<keyword id="KW-1185">Reference proteome</keyword>
<organism>
    <name type="scientific">Saccharomyces cerevisiae (strain ATCC 204508 / S288c)</name>
    <name type="common">Baker's yeast</name>
    <dbReference type="NCBI Taxonomy" id="559292"/>
    <lineage>
        <taxon>Eukaryota</taxon>
        <taxon>Fungi</taxon>
        <taxon>Dikarya</taxon>
        <taxon>Ascomycota</taxon>
        <taxon>Saccharomycotina</taxon>
        <taxon>Saccharomycetes</taxon>
        <taxon>Saccharomycetales</taxon>
        <taxon>Saccharomycetaceae</taxon>
        <taxon>Saccharomyces</taxon>
    </lineage>
</organism>
<accession>P14737</accession>
<accession>D6VSK0</accession>
<accession>Q04920</accession>
<name>RAD9_YEAST</name>
<protein>
    <recommendedName>
        <fullName>DNA repair protein RAD9</fullName>
    </recommendedName>
</protein>
<dbReference type="EMBL" id="M26049">
    <property type="protein sequence ID" value="AAA34954.1"/>
    <property type="molecule type" value="Genomic_DNA"/>
</dbReference>
<dbReference type="EMBL" id="Z48612">
    <property type="protein sequence ID" value="CAA88497.1"/>
    <property type="molecule type" value="Genomic_DNA"/>
</dbReference>
<dbReference type="EMBL" id="BK006938">
    <property type="protein sequence ID" value="DAA12060.1"/>
    <property type="molecule type" value="Genomic_DNA"/>
</dbReference>
<dbReference type="PIR" id="S59424">
    <property type="entry name" value="BVBYD9"/>
</dbReference>
<dbReference type="RefSeq" id="NP_010503.1">
    <property type="nucleotide sequence ID" value="NM_001180525.1"/>
</dbReference>
<dbReference type="PDB" id="1FHR">
    <property type="method" value="NMR"/>
    <property type="chains" value="P=826-832"/>
</dbReference>
<dbReference type="PDB" id="1J4K">
    <property type="method" value="NMR"/>
    <property type="chains" value="P=826-832"/>
</dbReference>
<dbReference type="PDB" id="1J4L">
    <property type="method" value="NMR"/>
    <property type="chains" value="P=599-607"/>
</dbReference>
<dbReference type="PDB" id="1J4P">
    <property type="method" value="NMR"/>
    <property type="chains" value="B=149-161"/>
</dbReference>
<dbReference type="PDB" id="1J4Q">
    <property type="method" value="NMR"/>
    <property type="chains" value="B=188-200"/>
</dbReference>
<dbReference type="PDB" id="1K2M">
    <property type="method" value="NMR"/>
    <property type="chains" value="P=826-832"/>
</dbReference>
<dbReference type="PDB" id="1K2N">
    <property type="method" value="NMR"/>
    <property type="chains" value="P=599-607"/>
</dbReference>
<dbReference type="PDB" id="1K3N">
    <property type="method" value="NMR"/>
    <property type="chains" value="B=149-161"/>
</dbReference>
<dbReference type="PDB" id="1K3Q">
    <property type="method" value="NMR"/>
    <property type="chains" value="B=188-200"/>
</dbReference>
<dbReference type="PDB" id="2FF4">
    <property type="method" value="X-ray"/>
    <property type="resolution" value="1.90 A"/>
    <property type="chains" value="E/F=188-195"/>
</dbReference>
<dbReference type="PDBsum" id="1FHR"/>
<dbReference type="PDBsum" id="1J4K"/>
<dbReference type="PDBsum" id="1J4L"/>
<dbReference type="PDBsum" id="1J4P"/>
<dbReference type="PDBsum" id="1J4Q"/>
<dbReference type="PDBsum" id="1K2M"/>
<dbReference type="PDBsum" id="1K2N"/>
<dbReference type="PDBsum" id="1K3N"/>
<dbReference type="PDBsum" id="1K3Q"/>
<dbReference type="PDBsum" id="2FF4"/>
<dbReference type="SMR" id="P14737"/>
<dbReference type="BioGRID" id="32270">
    <property type="interactions" value="504"/>
</dbReference>
<dbReference type="DIP" id="DIP-2516N"/>
<dbReference type="ELM" id="P14737"/>
<dbReference type="FunCoup" id="P14737">
    <property type="interactions" value="261"/>
</dbReference>
<dbReference type="IntAct" id="P14737">
    <property type="interactions" value="16"/>
</dbReference>
<dbReference type="MINT" id="P14737"/>
<dbReference type="STRING" id="4932.YDR217C"/>
<dbReference type="GlyGen" id="P14737">
    <property type="glycosylation" value="1 site"/>
</dbReference>
<dbReference type="iPTMnet" id="P14737"/>
<dbReference type="PaxDb" id="4932-YDR217C"/>
<dbReference type="PeptideAtlas" id="P14737"/>
<dbReference type="EnsemblFungi" id="YDR217C_mRNA">
    <property type="protein sequence ID" value="YDR217C"/>
    <property type="gene ID" value="YDR217C"/>
</dbReference>
<dbReference type="GeneID" id="851803"/>
<dbReference type="KEGG" id="sce:YDR217C"/>
<dbReference type="AGR" id="SGD:S000002625"/>
<dbReference type="SGD" id="S000002625">
    <property type="gene designation" value="RAD9"/>
</dbReference>
<dbReference type="VEuPathDB" id="FungiDB:YDR217C"/>
<dbReference type="eggNOG" id="KOG3548">
    <property type="taxonomic scope" value="Eukaryota"/>
</dbReference>
<dbReference type="HOGENOM" id="CLU_279536_0_0_1"/>
<dbReference type="InParanoid" id="P14737"/>
<dbReference type="OMA" id="DYKFACL"/>
<dbReference type="OrthoDB" id="129353at2759"/>
<dbReference type="BioCyc" id="YEAST:G3O-29798-MONOMER"/>
<dbReference type="Reactome" id="R-SCE-3232118">
    <property type="pathway name" value="SUMOylation of transcription factors"/>
</dbReference>
<dbReference type="Reactome" id="R-SCE-5693565">
    <property type="pathway name" value="Recruitment and ATM-mediated phosphorylation of repair and signaling proteins at DNA double strand breaks"/>
</dbReference>
<dbReference type="BioGRID-ORCS" id="851803">
    <property type="hits" value="2 hits in 10 CRISPR screens"/>
</dbReference>
<dbReference type="EvolutionaryTrace" id="P14737"/>
<dbReference type="PRO" id="PR:P14737"/>
<dbReference type="Proteomes" id="UP000002311">
    <property type="component" value="Chromosome IV"/>
</dbReference>
<dbReference type="RNAct" id="P14737">
    <property type="molecule type" value="protein"/>
</dbReference>
<dbReference type="GO" id="GO:0000785">
    <property type="term" value="C:chromatin"/>
    <property type="evidence" value="ECO:0000314"/>
    <property type="project" value="SGD"/>
</dbReference>
<dbReference type="GO" id="GO:0005634">
    <property type="term" value="C:nucleus"/>
    <property type="evidence" value="ECO:0000318"/>
    <property type="project" value="GO_Central"/>
</dbReference>
<dbReference type="GO" id="GO:0003690">
    <property type="term" value="F:double-stranded DNA binding"/>
    <property type="evidence" value="ECO:0000314"/>
    <property type="project" value="SGD"/>
</dbReference>
<dbReference type="GO" id="GO:0008047">
    <property type="term" value="F:enzyme activator activity"/>
    <property type="evidence" value="ECO:0000315"/>
    <property type="project" value="SGD"/>
</dbReference>
<dbReference type="GO" id="GO:0042393">
    <property type="term" value="F:histone binding"/>
    <property type="evidence" value="ECO:0000314"/>
    <property type="project" value="SGD"/>
</dbReference>
<dbReference type="GO" id="GO:0000077">
    <property type="term" value="P:DNA damage checkpoint signaling"/>
    <property type="evidence" value="ECO:0000315"/>
    <property type="project" value="SGD"/>
</dbReference>
<dbReference type="GO" id="GO:0006281">
    <property type="term" value="P:DNA repair"/>
    <property type="evidence" value="ECO:0000315"/>
    <property type="project" value="SGD"/>
</dbReference>
<dbReference type="GO" id="GO:0006302">
    <property type="term" value="P:double-strand break repair"/>
    <property type="evidence" value="ECO:0000315"/>
    <property type="project" value="SGD"/>
</dbReference>
<dbReference type="GO" id="GO:0031571">
    <property type="term" value="P:mitotic G1 DNA damage checkpoint signaling"/>
    <property type="evidence" value="ECO:0000315"/>
    <property type="project" value="SGD"/>
</dbReference>
<dbReference type="GO" id="GO:0031573">
    <property type="term" value="P:mitotic intra-S DNA damage checkpoint signaling"/>
    <property type="evidence" value="ECO:0000315"/>
    <property type="project" value="SGD"/>
</dbReference>
<dbReference type="GO" id="GO:0110027">
    <property type="term" value="P:negative regulation of DNA strand resection involved in replication fork processing"/>
    <property type="evidence" value="ECO:0000315"/>
    <property type="project" value="SGD"/>
</dbReference>
<dbReference type="GO" id="GO:0006289">
    <property type="term" value="P:nucleotide-excision repair"/>
    <property type="evidence" value="ECO:0000315"/>
    <property type="project" value="SGD"/>
</dbReference>
<dbReference type="GO" id="GO:0045944">
    <property type="term" value="P:positive regulation of transcription by RNA polymerase II"/>
    <property type="evidence" value="ECO:0000315"/>
    <property type="project" value="SGD"/>
</dbReference>
<dbReference type="GO" id="GO:0051726">
    <property type="term" value="P:regulation of cell cycle"/>
    <property type="evidence" value="ECO:0000315"/>
    <property type="project" value="SGD"/>
</dbReference>
<dbReference type="CDD" id="cd17745">
    <property type="entry name" value="BRCT_p53bp1_rpt1"/>
    <property type="match status" value="1"/>
</dbReference>
<dbReference type="FunFam" id="3.40.50.10190:FF:000102">
    <property type="entry name" value="Rad9p"/>
    <property type="match status" value="1"/>
</dbReference>
<dbReference type="Gene3D" id="3.40.50.10190">
    <property type="entry name" value="BRCT domain"/>
    <property type="match status" value="1"/>
</dbReference>
<dbReference type="IDEAL" id="IID50198"/>
<dbReference type="InterPro" id="IPR001357">
    <property type="entry name" value="BRCT_dom"/>
</dbReference>
<dbReference type="InterPro" id="IPR036420">
    <property type="entry name" value="BRCT_dom_sf"/>
</dbReference>
<dbReference type="InterPro" id="IPR047249">
    <property type="entry name" value="BRCT_p53bp1-like_rpt1"/>
</dbReference>
<dbReference type="InterPro" id="IPR013914">
    <property type="entry name" value="Rad9_Rad53-bd_dom_fun"/>
</dbReference>
<dbReference type="InterPro" id="IPR047252">
    <property type="entry name" value="TP53BP1-like"/>
</dbReference>
<dbReference type="PANTHER" id="PTHR15321:SF3">
    <property type="entry name" value="TP53-BINDING PROTEIN 1"/>
    <property type="match status" value="1"/>
</dbReference>
<dbReference type="PANTHER" id="PTHR15321">
    <property type="entry name" value="TUMOR SUPPRESSOR P53-BINDING PROTEIN 1"/>
    <property type="match status" value="1"/>
</dbReference>
<dbReference type="Pfam" id="PF00533">
    <property type="entry name" value="BRCT"/>
    <property type="match status" value="1"/>
</dbReference>
<dbReference type="Pfam" id="PF08605">
    <property type="entry name" value="Rad9_Rad53_bind"/>
    <property type="match status" value="1"/>
</dbReference>
<dbReference type="SMART" id="SM00292">
    <property type="entry name" value="BRCT"/>
    <property type="match status" value="1"/>
</dbReference>
<dbReference type="SUPFAM" id="SSF52113">
    <property type="entry name" value="BRCT domain"/>
    <property type="match status" value="1"/>
</dbReference>
<dbReference type="PROSITE" id="PS50172">
    <property type="entry name" value="BRCT"/>
    <property type="match status" value="1"/>
</dbReference>